<keyword id="KW-0378">Hydrolase</keyword>
<keyword id="KW-0479">Metal-binding</keyword>
<keyword id="KW-0482">Metalloprotease</keyword>
<keyword id="KW-0496">Mitochondrion</keyword>
<keyword id="KW-0645">Protease</keyword>
<keyword id="KW-1185">Reference proteome</keyword>
<keyword id="KW-0809">Transit peptide</keyword>
<keyword id="KW-0862">Zinc</keyword>
<reference key="1">
    <citation type="journal article" date="2009" name="Nature">
        <title>Evolution of pathogenicity and sexual reproduction in eight Candida genomes.</title>
        <authorList>
            <person name="Butler G."/>
            <person name="Rasmussen M.D."/>
            <person name="Lin M.F."/>
            <person name="Santos M.A.S."/>
            <person name="Sakthikumar S."/>
            <person name="Munro C.A."/>
            <person name="Rheinbay E."/>
            <person name="Grabherr M."/>
            <person name="Forche A."/>
            <person name="Reedy J.L."/>
            <person name="Agrafioti I."/>
            <person name="Arnaud M.B."/>
            <person name="Bates S."/>
            <person name="Brown A.J.P."/>
            <person name="Brunke S."/>
            <person name="Costanzo M.C."/>
            <person name="Fitzpatrick D.A."/>
            <person name="de Groot P.W.J."/>
            <person name="Harris D."/>
            <person name="Hoyer L.L."/>
            <person name="Hube B."/>
            <person name="Klis F.M."/>
            <person name="Kodira C."/>
            <person name="Lennard N."/>
            <person name="Logue M.E."/>
            <person name="Martin R."/>
            <person name="Neiman A.M."/>
            <person name="Nikolaou E."/>
            <person name="Quail M.A."/>
            <person name="Quinn J."/>
            <person name="Santos M.C."/>
            <person name="Schmitzberger F.F."/>
            <person name="Sherlock G."/>
            <person name="Shah P."/>
            <person name="Silverstein K.A.T."/>
            <person name="Skrzypek M.S."/>
            <person name="Soll D."/>
            <person name="Staggs R."/>
            <person name="Stansfield I."/>
            <person name="Stumpf M.P.H."/>
            <person name="Sudbery P.E."/>
            <person name="Srikantha T."/>
            <person name="Zeng Q."/>
            <person name="Berman J."/>
            <person name="Berriman M."/>
            <person name="Heitman J."/>
            <person name="Gow N.A.R."/>
            <person name="Lorenz M.C."/>
            <person name="Birren B.W."/>
            <person name="Kellis M."/>
            <person name="Cuomo C.A."/>
        </authorList>
    </citation>
    <scope>NUCLEOTIDE SEQUENCE [LARGE SCALE GENOMIC DNA]</scope>
    <source>
        <strain>ATCC 11503 / BCRC 21390 / CBS 2605 / JCM 1781 / NBRC 1676 / NRRL YB-4239</strain>
    </source>
</reference>
<protein>
    <recommendedName>
        <fullName>Mitochondrial intermediate peptidase</fullName>
        <shortName>MIP</shortName>
        <ecNumber>3.4.24.59</ecNumber>
    </recommendedName>
    <alternativeName>
        <fullName>Octapeptidyl aminopeptidase</fullName>
    </alternativeName>
</protein>
<evidence type="ECO:0000250" key="1"/>
<evidence type="ECO:0000255" key="2"/>
<evidence type="ECO:0000255" key="3">
    <source>
        <dbReference type="PROSITE-ProRule" id="PRU10095"/>
    </source>
</evidence>
<evidence type="ECO:0000256" key="4">
    <source>
        <dbReference type="SAM" id="MobiDB-lite"/>
    </source>
</evidence>
<evidence type="ECO:0000305" key="5"/>
<dbReference type="EC" id="3.4.24.59"/>
<dbReference type="EMBL" id="CH981530">
    <property type="protein sequence ID" value="EDK46464.1"/>
    <property type="molecule type" value="Genomic_DNA"/>
</dbReference>
<dbReference type="RefSeq" id="XP_001523832.1">
    <property type="nucleotide sequence ID" value="XM_001523782.1"/>
</dbReference>
<dbReference type="SMR" id="A5E4V6"/>
<dbReference type="FunCoup" id="A5E4V6">
    <property type="interactions" value="635"/>
</dbReference>
<dbReference type="STRING" id="379508.A5E4V6"/>
<dbReference type="GeneID" id="5231285"/>
<dbReference type="KEGG" id="lel:PVL30_005381"/>
<dbReference type="VEuPathDB" id="FungiDB:LELG_04645"/>
<dbReference type="eggNOG" id="KOG2090">
    <property type="taxonomic scope" value="Eukaryota"/>
</dbReference>
<dbReference type="HOGENOM" id="CLU_001805_0_0_1"/>
<dbReference type="InParanoid" id="A5E4V6"/>
<dbReference type="OMA" id="ALMFEYM"/>
<dbReference type="OrthoDB" id="17530at2759"/>
<dbReference type="Proteomes" id="UP000001996">
    <property type="component" value="Unassembled WGS sequence"/>
</dbReference>
<dbReference type="GO" id="GO:0005759">
    <property type="term" value="C:mitochondrial matrix"/>
    <property type="evidence" value="ECO:0007669"/>
    <property type="project" value="UniProtKB-SubCell"/>
</dbReference>
<dbReference type="GO" id="GO:0046872">
    <property type="term" value="F:metal ion binding"/>
    <property type="evidence" value="ECO:0007669"/>
    <property type="project" value="UniProtKB-KW"/>
</dbReference>
<dbReference type="GO" id="GO:0004222">
    <property type="term" value="F:metalloendopeptidase activity"/>
    <property type="evidence" value="ECO:0007669"/>
    <property type="project" value="UniProtKB-EC"/>
</dbReference>
<dbReference type="GO" id="GO:0006879">
    <property type="term" value="P:intracellular iron ion homeostasis"/>
    <property type="evidence" value="ECO:0007669"/>
    <property type="project" value="EnsemblFungi"/>
</dbReference>
<dbReference type="GO" id="GO:0006518">
    <property type="term" value="P:peptide metabolic process"/>
    <property type="evidence" value="ECO:0007669"/>
    <property type="project" value="TreeGrafter"/>
</dbReference>
<dbReference type="GO" id="GO:0006627">
    <property type="term" value="P:protein processing involved in protein targeting to mitochondrion"/>
    <property type="evidence" value="ECO:0007669"/>
    <property type="project" value="EnsemblFungi"/>
</dbReference>
<dbReference type="GO" id="GO:0050821">
    <property type="term" value="P:protein stabilization"/>
    <property type="evidence" value="ECO:0007669"/>
    <property type="project" value="EnsemblFungi"/>
</dbReference>
<dbReference type="CDD" id="cd06457">
    <property type="entry name" value="M3A_MIP"/>
    <property type="match status" value="1"/>
</dbReference>
<dbReference type="Gene3D" id="3.40.390.10">
    <property type="entry name" value="Collagenase (Catalytic Domain)"/>
    <property type="match status" value="1"/>
</dbReference>
<dbReference type="Gene3D" id="1.10.1370.10">
    <property type="entry name" value="Neurolysin, domain 3"/>
    <property type="match status" value="1"/>
</dbReference>
<dbReference type="InterPro" id="IPR033851">
    <property type="entry name" value="M3A_MIP"/>
</dbReference>
<dbReference type="InterPro" id="IPR024079">
    <property type="entry name" value="MetalloPept_cat_dom_sf"/>
</dbReference>
<dbReference type="InterPro" id="IPR024077">
    <property type="entry name" value="Neurolysin/TOP_dom2"/>
</dbReference>
<dbReference type="InterPro" id="IPR045090">
    <property type="entry name" value="Pept_M3A_M3B"/>
</dbReference>
<dbReference type="InterPro" id="IPR001567">
    <property type="entry name" value="Pept_M3A_M3B_dom"/>
</dbReference>
<dbReference type="PANTHER" id="PTHR11804:SF79">
    <property type="entry name" value="MITOCHONDRIAL INTERMEDIATE PEPTIDASE"/>
    <property type="match status" value="1"/>
</dbReference>
<dbReference type="PANTHER" id="PTHR11804">
    <property type="entry name" value="PROTEASE M3 THIMET OLIGOPEPTIDASE-RELATED"/>
    <property type="match status" value="1"/>
</dbReference>
<dbReference type="Pfam" id="PF01432">
    <property type="entry name" value="Peptidase_M3"/>
    <property type="match status" value="2"/>
</dbReference>
<dbReference type="SUPFAM" id="SSF55486">
    <property type="entry name" value="Metalloproteases ('zincins'), catalytic domain"/>
    <property type="match status" value="1"/>
</dbReference>
<dbReference type="PROSITE" id="PS00142">
    <property type="entry name" value="ZINC_PROTEASE"/>
    <property type="match status" value="1"/>
</dbReference>
<gene>
    <name type="primary">OCT1</name>
    <name type="ORF">LELG_04645</name>
</gene>
<proteinExistence type="inferred from homology"/>
<organism>
    <name type="scientific">Lodderomyces elongisporus (strain ATCC 11503 / CBS 2605 / JCM 1781 / NBRC 1676 / NRRL YB-4239)</name>
    <name type="common">Yeast</name>
    <name type="synonym">Saccharomyces elongisporus</name>
    <dbReference type="NCBI Taxonomy" id="379508"/>
    <lineage>
        <taxon>Eukaryota</taxon>
        <taxon>Fungi</taxon>
        <taxon>Dikarya</taxon>
        <taxon>Ascomycota</taxon>
        <taxon>Saccharomycotina</taxon>
        <taxon>Pichiomycetes</taxon>
        <taxon>Debaryomycetaceae</taxon>
        <taxon>Candida/Lodderomyces clade</taxon>
        <taxon>Lodderomyces</taxon>
    </lineage>
</organism>
<comment type="function">
    <text evidence="1">Cleaves proteins, imported into the mitochondrion, to their mature size. While most mitochondrial precursor proteins are processed to the mature form in one step by mitochondrial processing peptidase (MPP), the sequential cleavage by MIP of an octapeptide after initial processing by MPP is a required step for a subgroup of nuclear-encoded precursor proteins destined for the matrix or the inner membrane (By similarity).</text>
</comment>
<comment type="catalytic activity">
    <reaction>
        <text>Release of an N-terminal octapeptide as second stage of processing of some proteins imported into the mitochondrion.</text>
        <dbReference type="EC" id="3.4.24.59"/>
    </reaction>
</comment>
<comment type="cofactor">
    <cofactor evidence="1">
        <name>Zn(2+)</name>
        <dbReference type="ChEBI" id="CHEBI:29105"/>
    </cofactor>
    <text evidence="1">Binds 1 zinc ion.</text>
</comment>
<comment type="subcellular location">
    <subcellularLocation>
        <location evidence="1">Mitochondrion matrix</location>
    </subcellularLocation>
</comment>
<comment type="similarity">
    <text evidence="5">Belongs to the peptidase M3 family.</text>
</comment>
<feature type="transit peptide" description="Mitochondrion" evidence="2">
    <location>
        <begin position="1"/>
        <end position="25"/>
    </location>
</feature>
<feature type="chain" id="PRO_0000338586" description="Mitochondrial intermediate peptidase">
    <location>
        <begin position="26"/>
        <end position="811"/>
    </location>
</feature>
<feature type="region of interest" description="Disordered" evidence="4">
    <location>
        <begin position="423"/>
        <end position="450"/>
    </location>
</feature>
<feature type="compositionally biased region" description="Low complexity" evidence="4">
    <location>
        <begin position="431"/>
        <end position="450"/>
    </location>
</feature>
<feature type="active site" evidence="3">
    <location>
        <position position="594"/>
    </location>
</feature>
<feature type="binding site" evidence="3">
    <location>
        <position position="593"/>
    </location>
    <ligand>
        <name>Zn(2+)</name>
        <dbReference type="ChEBI" id="CHEBI:29105"/>
        <note>catalytic</note>
    </ligand>
</feature>
<feature type="binding site" evidence="3">
    <location>
        <position position="597"/>
    </location>
    <ligand>
        <name>Zn(2+)</name>
        <dbReference type="ChEBI" id="CHEBI:29105"/>
        <note>catalytic</note>
    </ligand>
</feature>
<feature type="binding site" evidence="3">
    <location>
        <position position="600"/>
    </location>
    <ligand>
        <name>Zn(2+)</name>
        <dbReference type="ChEBI" id="CHEBI:29105"/>
        <note>catalytic</note>
    </ligand>
</feature>
<sequence>MRSGSRLSNYLVRLSGRVSFTQKRSLTNVKLPSNVNYERLKAAFDSDEHTLNGKNNNNEGKLFSKTALFQGQKDGSASTGLFKNSYLTSPQGLVQFSKKSKLQAQTLVDEMTRDVLTHQGKLDYIKKLDQLSDILCRTIDVAEFIRVVHDDQKWVDAAQQTHEIIFEYMNQLNTNVELYANLVKILEDKDLISQLSDEEIKVGEYLRQDFERSGIHMDPQSRDQFVSLTQEISIMGSHFNNESSSLKSDWISITSNEFSAIEDRFIQSEVMRASALYPGKKESGTYYIPLASAIPYRIMIQCGSGNLRKKMWIGLHEASDEQVQVLNHFVAYRALLAKMLGYDSYAHYQLEHKMAKKPENVLSFLTNLQENLKNSQVLKELRALSALQQGYSLLSDEELIRQIKPWDRDFLLKSFEAKKLSSTENGEKASTDTSTSTTTSTTTTDSTTTTATFSNSTDSVAIKRLCEYFSIGTVIAGLSKLFSALYNISFVVEPTVKGEVWNEKRVRKLNVLNNSNGETMGYLYLDFCSPKVFPSHFTVVCLRQLNKAESVSEHGDMVQLSKDYQLPVVALVCNFTSGNPTLLSLDQVDTIFHEMGHAMHSMIGRTQLHNLSGTRCATDFVEIPSVLMESFSKDPRVLSEIGCHYRTGEPVPINLLEQAQSQRSALEACETFVQSKMAMLDQELHSKEIVELLRQGLEAINSTEIYHQVERDLEIFADEWSTWHGKFPHLFSYGAVYYSYLLDRAIANVLWQKLFAKDPWSRDAGIKYKEEILKWGGTKDPWACLADALQMEELRKGDAHAMQIIGENSKL</sequence>
<accession>A5E4V6</accession>
<name>PMIP_LODEL</name>